<gene>
    <name evidence="1" type="primary">rplP</name>
    <name type="ordered locus">YPO0217</name>
    <name type="ordered locus">y3996</name>
    <name type="ordered locus">YP_0214</name>
</gene>
<evidence type="ECO:0000255" key="1">
    <source>
        <dbReference type="HAMAP-Rule" id="MF_01342"/>
    </source>
</evidence>
<evidence type="ECO:0000305" key="2"/>
<feature type="chain" id="PRO_0000062260" description="Large ribosomal subunit protein uL16">
    <location>
        <begin position="1"/>
        <end position="136"/>
    </location>
</feature>
<proteinExistence type="inferred from homology"/>
<protein>
    <recommendedName>
        <fullName evidence="1">Large ribosomal subunit protein uL16</fullName>
    </recommendedName>
    <alternativeName>
        <fullName evidence="2">50S ribosomal protein L16</fullName>
    </alternativeName>
</protein>
<keyword id="KW-1185">Reference proteome</keyword>
<keyword id="KW-0687">Ribonucleoprotein</keyword>
<keyword id="KW-0689">Ribosomal protein</keyword>
<keyword id="KW-0694">RNA-binding</keyword>
<keyword id="KW-0699">rRNA-binding</keyword>
<keyword id="KW-0820">tRNA-binding</keyword>
<dbReference type="EMBL" id="AL590842">
    <property type="protein sequence ID" value="CAL18899.1"/>
    <property type="molecule type" value="Genomic_DNA"/>
</dbReference>
<dbReference type="EMBL" id="AE009952">
    <property type="protein sequence ID" value="AAM87540.1"/>
    <property type="molecule type" value="Genomic_DNA"/>
</dbReference>
<dbReference type="EMBL" id="AE017042">
    <property type="protein sequence ID" value="AAS60490.1"/>
    <property type="molecule type" value="Genomic_DNA"/>
</dbReference>
<dbReference type="PIR" id="AI0026">
    <property type="entry name" value="AI0026"/>
</dbReference>
<dbReference type="RefSeq" id="WP_002218940.1">
    <property type="nucleotide sequence ID" value="NZ_WUCM01000078.1"/>
</dbReference>
<dbReference type="RefSeq" id="YP_002345297.1">
    <property type="nucleotide sequence ID" value="NC_003143.1"/>
</dbReference>
<dbReference type="SMR" id="Q8ZJA5"/>
<dbReference type="STRING" id="214092.YPO0217"/>
<dbReference type="PaxDb" id="214092-YPO0217"/>
<dbReference type="DNASU" id="1148943"/>
<dbReference type="EnsemblBacteria" id="AAS60490">
    <property type="protein sequence ID" value="AAS60490"/>
    <property type="gene ID" value="YP_0214"/>
</dbReference>
<dbReference type="GeneID" id="97454238"/>
<dbReference type="KEGG" id="ype:YPO0217"/>
<dbReference type="KEGG" id="ypk:y3996"/>
<dbReference type="KEGG" id="ypm:YP_0214"/>
<dbReference type="PATRIC" id="fig|214092.21.peg.446"/>
<dbReference type="eggNOG" id="COG0197">
    <property type="taxonomic scope" value="Bacteria"/>
</dbReference>
<dbReference type="HOGENOM" id="CLU_078858_2_1_6"/>
<dbReference type="OMA" id="KGAVEYW"/>
<dbReference type="OrthoDB" id="9802589at2"/>
<dbReference type="Proteomes" id="UP000000815">
    <property type="component" value="Chromosome"/>
</dbReference>
<dbReference type="Proteomes" id="UP000001019">
    <property type="component" value="Chromosome"/>
</dbReference>
<dbReference type="Proteomes" id="UP000002490">
    <property type="component" value="Chromosome"/>
</dbReference>
<dbReference type="GO" id="GO:0022625">
    <property type="term" value="C:cytosolic large ribosomal subunit"/>
    <property type="evidence" value="ECO:0000318"/>
    <property type="project" value="GO_Central"/>
</dbReference>
<dbReference type="GO" id="GO:0019843">
    <property type="term" value="F:rRNA binding"/>
    <property type="evidence" value="ECO:0000318"/>
    <property type="project" value="GO_Central"/>
</dbReference>
<dbReference type="GO" id="GO:0003735">
    <property type="term" value="F:structural constituent of ribosome"/>
    <property type="evidence" value="ECO:0000318"/>
    <property type="project" value="GO_Central"/>
</dbReference>
<dbReference type="GO" id="GO:0000049">
    <property type="term" value="F:tRNA binding"/>
    <property type="evidence" value="ECO:0007669"/>
    <property type="project" value="UniProtKB-KW"/>
</dbReference>
<dbReference type="GO" id="GO:0006412">
    <property type="term" value="P:translation"/>
    <property type="evidence" value="ECO:0007669"/>
    <property type="project" value="UniProtKB-UniRule"/>
</dbReference>
<dbReference type="CDD" id="cd01433">
    <property type="entry name" value="Ribosomal_L16_L10e"/>
    <property type="match status" value="1"/>
</dbReference>
<dbReference type="FunFam" id="3.90.1170.10:FF:000001">
    <property type="entry name" value="50S ribosomal protein L16"/>
    <property type="match status" value="1"/>
</dbReference>
<dbReference type="Gene3D" id="3.90.1170.10">
    <property type="entry name" value="Ribosomal protein L10e/L16"/>
    <property type="match status" value="1"/>
</dbReference>
<dbReference type="HAMAP" id="MF_01342">
    <property type="entry name" value="Ribosomal_uL16"/>
    <property type="match status" value="1"/>
</dbReference>
<dbReference type="InterPro" id="IPR047873">
    <property type="entry name" value="Ribosomal_uL16"/>
</dbReference>
<dbReference type="InterPro" id="IPR000114">
    <property type="entry name" value="Ribosomal_uL16_bact-type"/>
</dbReference>
<dbReference type="InterPro" id="IPR020798">
    <property type="entry name" value="Ribosomal_uL16_CS"/>
</dbReference>
<dbReference type="InterPro" id="IPR016180">
    <property type="entry name" value="Ribosomal_uL16_dom"/>
</dbReference>
<dbReference type="InterPro" id="IPR036920">
    <property type="entry name" value="Ribosomal_uL16_sf"/>
</dbReference>
<dbReference type="NCBIfam" id="TIGR01164">
    <property type="entry name" value="rplP_bact"/>
    <property type="match status" value="1"/>
</dbReference>
<dbReference type="PANTHER" id="PTHR12220">
    <property type="entry name" value="50S/60S RIBOSOMAL PROTEIN L16"/>
    <property type="match status" value="1"/>
</dbReference>
<dbReference type="PANTHER" id="PTHR12220:SF13">
    <property type="entry name" value="LARGE RIBOSOMAL SUBUNIT PROTEIN UL16M"/>
    <property type="match status" value="1"/>
</dbReference>
<dbReference type="Pfam" id="PF00252">
    <property type="entry name" value="Ribosomal_L16"/>
    <property type="match status" value="1"/>
</dbReference>
<dbReference type="PRINTS" id="PR00060">
    <property type="entry name" value="RIBOSOMALL16"/>
</dbReference>
<dbReference type="SUPFAM" id="SSF54686">
    <property type="entry name" value="Ribosomal protein L16p/L10e"/>
    <property type="match status" value="1"/>
</dbReference>
<dbReference type="PROSITE" id="PS00586">
    <property type="entry name" value="RIBOSOMAL_L16_1"/>
    <property type="match status" value="1"/>
</dbReference>
<dbReference type="PROSITE" id="PS00701">
    <property type="entry name" value="RIBOSOMAL_L16_2"/>
    <property type="match status" value="1"/>
</dbReference>
<comment type="function">
    <text evidence="1">Binds 23S rRNA and is also seen to make contacts with the A and possibly P site tRNAs.</text>
</comment>
<comment type="subunit">
    <text evidence="1">Part of the 50S ribosomal subunit.</text>
</comment>
<comment type="similarity">
    <text evidence="1">Belongs to the universal ribosomal protein uL16 family.</text>
</comment>
<organism>
    <name type="scientific">Yersinia pestis</name>
    <dbReference type="NCBI Taxonomy" id="632"/>
    <lineage>
        <taxon>Bacteria</taxon>
        <taxon>Pseudomonadati</taxon>
        <taxon>Pseudomonadota</taxon>
        <taxon>Gammaproteobacteria</taxon>
        <taxon>Enterobacterales</taxon>
        <taxon>Yersiniaceae</taxon>
        <taxon>Yersinia</taxon>
    </lineage>
</organism>
<reference key="1">
    <citation type="journal article" date="2001" name="Nature">
        <title>Genome sequence of Yersinia pestis, the causative agent of plague.</title>
        <authorList>
            <person name="Parkhill J."/>
            <person name="Wren B.W."/>
            <person name="Thomson N.R."/>
            <person name="Titball R.W."/>
            <person name="Holden M.T.G."/>
            <person name="Prentice M.B."/>
            <person name="Sebaihia M."/>
            <person name="James K.D."/>
            <person name="Churcher C.M."/>
            <person name="Mungall K.L."/>
            <person name="Baker S."/>
            <person name="Basham D."/>
            <person name="Bentley S.D."/>
            <person name="Brooks K."/>
            <person name="Cerdeno-Tarraga A.-M."/>
            <person name="Chillingworth T."/>
            <person name="Cronin A."/>
            <person name="Davies R.M."/>
            <person name="Davis P."/>
            <person name="Dougan G."/>
            <person name="Feltwell T."/>
            <person name="Hamlin N."/>
            <person name="Holroyd S."/>
            <person name="Jagels K."/>
            <person name="Karlyshev A.V."/>
            <person name="Leather S."/>
            <person name="Moule S."/>
            <person name="Oyston P.C.F."/>
            <person name="Quail M.A."/>
            <person name="Rutherford K.M."/>
            <person name="Simmonds M."/>
            <person name="Skelton J."/>
            <person name="Stevens K."/>
            <person name="Whitehead S."/>
            <person name="Barrell B.G."/>
        </authorList>
    </citation>
    <scope>NUCLEOTIDE SEQUENCE [LARGE SCALE GENOMIC DNA]</scope>
    <source>
        <strain>CO-92 / Biovar Orientalis</strain>
    </source>
</reference>
<reference key="2">
    <citation type="journal article" date="2002" name="J. Bacteriol.">
        <title>Genome sequence of Yersinia pestis KIM.</title>
        <authorList>
            <person name="Deng W."/>
            <person name="Burland V."/>
            <person name="Plunkett G. III"/>
            <person name="Boutin A."/>
            <person name="Mayhew G.F."/>
            <person name="Liss P."/>
            <person name="Perna N.T."/>
            <person name="Rose D.J."/>
            <person name="Mau B."/>
            <person name="Zhou S."/>
            <person name="Schwartz D.C."/>
            <person name="Fetherston J.D."/>
            <person name="Lindler L.E."/>
            <person name="Brubaker R.R."/>
            <person name="Plano G.V."/>
            <person name="Straley S.C."/>
            <person name="McDonough K.A."/>
            <person name="Nilles M.L."/>
            <person name="Matson J.S."/>
            <person name="Blattner F.R."/>
            <person name="Perry R.D."/>
        </authorList>
    </citation>
    <scope>NUCLEOTIDE SEQUENCE [LARGE SCALE GENOMIC DNA]</scope>
    <source>
        <strain>KIM10+ / Biovar Mediaevalis</strain>
    </source>
</reference>
<reference key="3">
    <citation type="journal article" date="2004" name="DNA Res.">
        <title>Complete genome sequence of Yersinia pestis strain 91001, an isolate avirulent to humans.</title>
        <authorList>
            <person name="Song Y."/>
            <person name="Tong Z."/>
            <person name="Wang J."/>
            <person name="Wang L."/>
            <person name="Guo Z."/>
            <person name="Han Y."/>
            <person name="Zhang J."/>
            <person name="Pei D."/>
            <person name="Zhou D."/>
            <person name="Qin H."/>
            <person name="Pang X."/>
            <person name="Han Y."/>
            <person name="Zhai J."/>
            <person name="Li M."/>
            <person name="Cui B."/>
            <person name="Qi Z."/>
            <person name="Jin L."/>
            <person name="Dai R."/>
            <person name="Chen F."/>
            <person name="Li S."/>
            <person name="Ye C."/>
            <person name="Du Z."/>
            <person name="Lin W."/>
            <person name="Wang J."/>
            <person name="Yu J."/>
            <person name="Yang H."/>
            <person name="Wang J."/>
            <person name="Huang P."/>
            <person name="Yang R."/>
        </authorList>
    </citation>
    <scope>NUCLEOTIDE SEQUENCE [LARGE SCALE GENOMIC DNA]</scope>
    <source>
        <strain>91001 / Biovar Mediaevalis</strain>
    </source>
</reference>
<sequence>MLQPKRTKFRKMHKGRNRGLAQGTDVSFGEFGLKACGRCRLTARQIEAARRAMTRAIKRQGKVWIRVFPDKPITEKPLEVRMGKGKGNVEYWVALIQPGKVLFEMAGVPEETAREAFKLAAAKLPVGTTFVTKTVM</sequence>
<accession>Q8ZJA5</accession>
<accession>Q0WK91</accession>
<accession>Q74XZ0</accession>
<accession>Q7CFT8</accession>
<name>RL16_YERPE</name>